<feature type="chain" id="PRO_0000179097" description="Uncharacterized protein TC_0206">
    <location>
        <begin position="1"/>
        <end position="238"/>
    </location>
</feature>
<feature type="transmembrane region" description="Helical" evidence="1">
    <location>
        <begin position="22"/>
        <end position="42"/>
    </location>
</feature>
<feature type="transmembrane region" description="Helical" evidence="1">
    <location>
        <begin position="49"/>
        <end position="69"/>
    </location>
</feature>
<feature type="transmembrane region" description="Helical" evidence="1">
    <location>
        <begin position="78"/>
        <end position="98"/>
    </location>
</feature>
<feature type="transmembrane region" description="Helical" evidence="1">
    <location>
        <begin position="105"/>
        <end position="125"/>
    </location>
</feature>
<feature type="transmembrane region" description="Helical" evidence="1">
    <location>
        <begin position="141"/>
        <end position="161"/>
    </location>
</feature>
<feature type="transmembrane region" description="Helical" evidence="1">
    <location>
        <begin position="166"/>
        <end position="186"/>
    </location>
</feature>
<feature type="transmembrane region" description="Helical" evidence="1">
    <location>
        <begin position="208"/>
        <end position="228"/>
    </location>
</feature>
<sequence length="238" mass="26309">MGLYDRDYTQDSRLPGTFSSRVYGWMTAGLAVTALTSLGLYATGAYRTLFSLWWVWCFATLGVSFYIQAQIQKLSVPAVMGLFLAYSVLEGMFFGTMVPVYAAQFGGGIVWAAFGSAAVIFGLSAAYGAFTKSDLTQIHRILMLALIGLMVISLGFLVVSLFTPMPLMYLLICYLGLIIFVGLTVVDAQSIRRVARSVGDHGDLSYKLSLIMALQMYCNVIMIFWYLLQIFASSDKRR</sequence>
<comment type="subcellular location">
    <subcellularLocation>
        <location evidence="2">Cell membrane</location>
        <topology evidence="2">Multi-pass membrane protein</topology>
    </subcellularLocation>
</comment>
<comment type="similarity">
    <text evidence="2">Belongs to the BI1 family.</text>
</comment>
<evidence type="ECO:0000255" key="1"/>
<evidence type="ECO:0000305" key="2"/>
<reference key="1">
    <citation type="journal article" date="2000" name="Nucleic Acids Res.">
        <title>Genome sequences of Chlamydia trachomatis MoPn and Chlamydia pneumoniae AR39.</title>
        <authorList>
            <person name="Read T.D."/>
            <person name="Brunham R.C."/>
            <person name="Shen C."/>
            <person name="Gill S.R."/>
            <person name="Heidelberg J.F."/>
            <person name="White O."/>
            <person name="Hickey E.K."/>
            <person name="Peterson J.D."/>
            <person name="Utterback T.R."/>
            <person name="Berry K.J."/>
            <person name="Bass S."/>
            <person name="Linher K.D."/>
            <person name="Weidman J.F."/>
            <person name="Khouri H.M."/>
            <person name="Craven B."/>
            <person name="Bowman C."/>
            <person name="Dodson R.J."/>
            <person name="Gwinn M.L."/>
            <person name="Nelson W.C."/>
            <person name="DeBoy R.T."/>
            <person name="Kolonay J.F."/>
            <person name="McClarty G."/>
            <person name="Salzberg S.L."/>
            <person name="Eisen J.A."/>
            <person name="Fraser C.M."/>
        </authorList>
    </citation>
    <scope>NUCLEOTIDE SEQUENCE [LARGE SCALE GENOMIC DNA]</scope>
    <source>
        <strain>MoPn / Nigg</strain>
    </source>
</reference>
<name>Y206_CHLMU</name>
<proteinExistence type="inferred from homology"/>
<keyword id="KW-1003">Cell membrane</keyword>
<keyword id="KW-0472">Membrane</keyword>
<keyword id="KW-0812">Transmembrane</keyword>
<keyword id="KW-1133">Transmembrane helix</keyword>
<dbReference type="EMBL" id="AE002160">
    <property type="protein sequence ID" value="AAF39078.1"/>
    <property type="molecule type" value="Genomic_DNA"/>
</dbReference>
<dbReference type="PIR" id="E81729">
    <property type="entry name" value="E81729"/>
</dbReference>
<dbReference type="RefSeq" id="WP_010229817.1">
    <property type="nucleotide sequence ID" value="NZ_CP063055.1"/>
</dbReference>
<dbReference type="SMR" id="Q9PLA1"/>
<dbReference type="GeneID" id="1246332"/>
<dbReference type="KEGG" id="cmu:TC_0206"/>
<dbReference type="eggNOG" id="COG0670">
    <property type="taxonomic scope" value="Bacteria"/>
</dbReference>
<dbReference type="HOGENOM" id="CLU_058671_1_0_0"/>
<dbReference type="OrthoDB" id="9793828at2"/>
<dbReference type="Proteomes" id="UP000000800">
    <property type="component" value="Chromosome"/>
</dbReference>
<dbReference type="GO" id="GO:0005886">
    <property type="term" value="C:plasma membrane"/>
    <property type="evidence" value="ECO:0007669"/>
    <property type="project" value="UniProtKB-SubCell"/>
</dbReference>
<dbReference type="CDD" id="cd10432">
    <property type="entry name" value="BI-1-like_bacterial"/>
    <property type="match status" value="1"/>
</dbReference>
<dbReference type="InterPro" id="IPR006214">
    <property type="entry name" value="Bax_inhibitor_1-related"/>
</dbReference>
<dbReference type="PANTHER" id="PTHR23291">
    <property type="entry name" value="BAX INHIBITOR-RELATED"/>
    <property type="match status" value="1"/>
</dbReference>
<dbReference type="PANTHER" id="PTHR23291:SF50">
    <property type="entry name" value="PROTEIN LIFEGUARD 4"/>
    <property type="match status" value="1"/>
</dbReference>
<dbReference type="Pfam" id="PF01027">
    <property type="entry name" value="Bax1-I"/>
    <property type="match status" value="1"/>
</dbReference>
<gene>
    <name type="ordered locus">TC_0206</name>
</gene>
<protein>
    <recommendedName>
        <fullName>Uncharacterized protein TC_0206</fullName>
    </recommendedName>
</protein>
<accession>Q9PLA1</accession>
<organism>
    <name type="scientific">Chlamydia muridarum (strain MoPn / Nigg)</name>
    <dbReference type="NCBI Taxonomy" id="243161"/>
    <lineage>
        <taxon>Bacteria</taxon>
        <taxon>Pseudomonadati</taxon>
        <taxon>Chlamydiota</taxon>
        <taxon>Chlamydiia</taxon>
        <taxon>Chlamydiales</taxon>
        <taxon>Chlamydiaceae</taxon>
        <taxon>Chlamydia/Chlamydophila group</taxon>
        <taxon>Chlamydia</taxon>
    </lineage>
</organism>